<organism>
    <name type="scientific">Helicobacter acinonychis (strain Sheeba)</name>
    <dbReference type="NCBI Taxonomy" id="382638"/>
    <lineage>
        <taxon>Bacteria</taxon>
        <taxon>Pseudomonadati</taxon>
        <taxon>Campylobacterota</taxon>
        <taxon>Epsilonproteobacteria</taxon>
        <taxon>Campylobacterales</taxon>
        <taxon>Helicobacteraceae</taxon>
        <taxon>Helicobacter</taxon>
    </lineage>
</organism>
<dbReference type="EC" id="3.1.-.-" evidence="1"/>
<dbReference type="EMBL" id="AM260522">
    <property type="protein sequence ID" value="CAJ99462.1"/>
    <property type="status" value="ALT_INIT"/>
    <property type="molecule type" value="Genomic_DNA"/>
</dbReference>
<dbReference type="RefSeq" id="WP_011577575.1">
    <property type="nucleotide sequence ID" value="NC_008229.1"/>
</dbReference>
<dbReference type="SMR" id="Q17Y14"/>
<dbReference type="STRING" id="382638.Hac_0656"/>
<dbReference type="GeneID" id="31758114"/>
<dbReference type="KEGG" id="hac:Hac_0656"/>
<dbReference type="eggNOG" id="COG1418">
    <property type="taxonomic scope" value="Bacteria"/>
</dbReference>
<dbReference type="HOGENOM" id="CLU_028328_1_0_7"/>
<dbReference type="OrthoDB" id="9803205at2"/>
<dbReference type="BioCyc" id="HACI382638:HAC_RS02875-MONOMER"/>
<dbReference type="Proteomes" id="UP000000775">
    <property type="component" value="Chromosome"/>
</dbReference>
<dbReference type="GO" id="GO:0005886">
    <property type="term" value="C:plasma membrane"/>
    <property type="evidence" value="ECO:0007669"/>
    <property type="project" value="UniProtKB-SubCell"/>
</dbReference>
<dbReference type="GO" id="GO:0003723">
    <property type="term" value="F:RNA binding"/>
    <property type="evidence" value="ECO:0007669"/>
    <property type="project" value="UniProtKB-UniRule"/>
</dbReference>
<dbReference type="GO" id="GO:0004521">
    <property type="term" value="F:RNA endonuclease activity"/>
    <property type="evidence" value="ECO:0007669"/>
    <property type="project" value="UniProtKB-UniRule"/>
</dbReference>
<dbReference type="GO" id="GO:0006402">
    <property type="term" value="P:mRNA catabolic process"/>
    <property type="evidence" value="ECO:0007669"/>
    <property type="project" value="UniProtKB-UniRule"/>
</dbReference>
<dbReference type="CDD" id="cd00077">
    <property type="entry name" value="HDc"/>
    <property type="match status" value="1"/>
</dbReference>
<dbReference type="CDD" id="cd22431">
    <property type="entry name" value="KH-I_RNaseY"/>
    <property type="match status" value="1"/>
</dbReference>
<dbReference type="FunFam" id="1.10.3210.10:FF:000013">
    <property type="entry name" value="Ribonuclease Y"/>
    <property type="match status" value="1"/>
</dbReference>
<dbReference type="Gene3D" id="1.10.3210.10">
    <property type="entry name" value="Hypothetical protein af1432"/>
    <property type="match status" value="1"/>
</dbReference>
<dbReference type="Gene3D" id="3.30.1370.10">
    <property type="entry name" value="K Homology domain, type 1"/>
    <property type="match status" value="1"/>
</dbReference>
<dbReference type="HAMAP" id="MF_00335">
    <property type="entry name" value="RNase_Y"/>
    <property type="match status" value="1"/>
</dbReference>
<dbReference type="InterPro" id="IPR003607">
    <property type="entry name" value="HD/PDEase_dom"/>
</dbReference>
<dbReference type="InterPro" id="IPR006674">
    <property type="entry name" value="HD_domain"/>
</dbReference>
<dbReference type="InterPro" id="IPR006675">
    <property type="entry name" value="HDIG_dom"/>
</dbReference>
<dbReference type="InterPro" id="IPR004087">
    <property type="entry name" value="KH_dom"/>
</dbReference>
<dbReference type="InterPro" id="IPR004088">
    <property type="entry name" value="KH_dom_type_1"/>
</dbReference>
<dbReference type="InterPro" id="IPR036612">
    <property type="entry name" value="KH_dom_type_1_sf"/>
</dbReference>
<dbReference type="InterPro" id="IPR017705">
    <property type="entry name" value="Ribonuclease_Y"/>
</dbReference>
<dbReference type="InterPro" id="IPR022711">
    <property type="entry name" value="RNase_Y_N"/>
</dbReference>
<dbReference type="NCBIfam" id="TIGR00277">
    <property type="entry name" value="HDIG"/>
    <property type="match status" value="1"/>
</dbReference>
<dbReference type="NCBIfam" id="TIGR03319">
    <property type="entry name" value="RNase_Y"/>
    <property type="match status" value="1"/>
</dbReference>
<dbReference type="PANTHER" id="PTHR12826">
    <property type="entry name" value="RIBONUCLEASE Y"/>
    <property type="match status" value="1"/>
</dbReference>
<dbReference type="PANTHER" id="PTHR12826:SF15">
    <property type="entry name" value="RIBONUCLEASE Y"/>
    <property type="match status" value="1"/>
</dbReference>
<dbReference type="Pfam" id="PF01966">
    <property type="entry name" value="HD"/>
    <property type="match status" value="1"/>
</dbReference>
<dbReference type="Pfam" id="PF00013">
    <property type="entry name" value="KH_1"/>
    <property type="match status" value="1"/>
</dbReference>
<dbReference type="Pfam" id="PF12072">
    <property type="entry name" value="RNase_Y_N"/>
    <property type="match status" value="1"/>
</dbReference>
<dbReference type="SMART" id="SM00471">
    <property type="entry name" value="HDc"/>
    <property type="match status" value="1"/>
</dbReference>
<dbReference type="SMART" id="SM00322">
    <property type="entry name" value="KH"/>
    <property type="match status" value="1"/>
</dbReference>
<dbReference type="SUPFAM" id="SSF54791">
    <property type="entry name" value="Eukaryotic type KH-domain (KH-domain type I)"/>
    <property type="match status" value="1"/>
</dbReference>
<dbReference type="SUPFAM" id="SSF109604">
    <property type="entry name" value="HD-domain/PDEase-like"/>
    <property type="match status" value="1"/>
</dbReference>
<dbReference type="PROSITE" id="PS51831">
    <property type="entry name" value="HD"/>
    <property type="match status" value="1"/>
</dbReference>
<dbReference type="PROSITE" id="PS50084">
    <property type="entry name" value="KH_TYPE_1"/>
    <property type="match status" value="1"/>
</dbReference>
<comment type="function">
    <text evidence="1">Endoribonuclease that initiates mRNA decay.</text>
</comment>
<comment type="subcellular location">
    <subcellularLocation>
        <location evidence="1">Cell membrane</location>
        <topology evidence="1">Single-pass membrane protein</topology>
    </subcellularLocation>
</comment>
<comment type="similarity">
    <text evidence="1">Belongs to the RNase Y family.</text>
</comment>
<comment type="sequence caution" evidence="3">
    <conflict type="erroneous initiation">
        <sequence resource="EMBL-CDS" id="CAJ99462"/>
    </conflict>
</comment>
<reference key="1">
    <citation type="journal article" date="2006" name="PLoS Genet.">
        <title>Who ate whom? Adaptive Helicobacter genomic changes that accompanied a host jump from early humans to large felines.</title>
        <authorList>
            <person name="Eppinger M."/>
            <person name="Baar C."/>
            <person name="Linz B."/>
            <person name="Raddatz G."/>
            <person name="Lanz C."/>
            <person name="Keller H."/>
            <person name="Morelli G."/>
            <person name="Gressmann H."/>
            <person name="Achtman M."/>
            <person name="Schuster S.C."/>
        </authorList>
    </citation>
    <scope>NUCLEOTIDE SEQUENCE [LARGE SCALE GENOMIC DNA]</scope>
    <source>
        <strain>Sheeba</strain>
    </source>
</reference>
<sequence length="529" mass="60301">MGNGLIYISLEVIVACLISALAMYYVMKKIYYARGQAVLKSASAKAKLMEFQAKSFVEAEEMRMKSQECKLQQQYENKNLQLKAHFDKKEAYLKHLEAQHKEFVRDEKRYLEKEKQELEKERQILEQEKENFKKQYATCKENQSKALDVMLNYMAYTKEEIKSMILKQLEEELEAQKSALIRRYEKEAKEESKKKSYAILAEATARFAGNYAIENFTNRIALPCSEYIGRVIGKDGKNIEAFKKISGVDIEFSEGDKELCLSSFNIFRREVASETLKILIEDGRIQPNRIEEVYHRVVRNMEKELLSEGQSVVLELELGAMEDELKILLGKMRYRSSFGQNALQHSKEVALLAGLIAEQLGGDKKLARRAGILHDIGKALTQELGRDHVSLGVEVCKRNKEDPVVINAIYAHHGHEEIMSIECASVCAADALSAGRPGARRKSDEEYAKRMQALEEIALGFEGVEKAYAMESGRELRVIVKSNQVRDNQVPIIARKIAKKIEESAQYVGEVGVQVVRESRFKTTATLKQ</sequence>
<protein>
    <recommendedName>
        <fullName evidence="1">Ribonuclease Y</fullName>
        <shortName evidence="1">RNase Y</shortName>
        <ecNumber evidence="1">3.1.-.-</ecNumber>
    </recommendedName>
</protein>
<evidence type="ECO:0000255" key="1">
    <source>
        <dbReference type="HAMAP-Rule" id="MF_00335"/>
    </source>
</evidence>
<evidence type="ECO:0000255" key="2">
    <source>
        <dbReference type="PROSITE-ProRule" id="PRU01175"/>
    </source>
</evidence>
<evidence type="ECO:0000305" key="3"/>
<name>RNY_HELAH</name>
<accession>Q17Y14</accession>
<feature type="chain" id="PRO_0000344884" description="Ribonuclease Y">
    <location>
        <begin position="1"/>
        <end position="529"/>
    </location>
</feature>
<feature type="transmembrane region" description="Helical" evidence="1">
    <location>
        <begin position="4"/>
        <end position="24"/>
    </location>
</feature>
<feature type="domain" description="KH" evidence="1">
    <location>
        <begin position="216"/>
        <end position="297"/>
    </location>
</feature>
<feature type="domain" description="HD" evidence="2">
    <location>
        <begin position="342"/>
        <end position="435"/>
    </location>
</feature>
<proteinExistence type="inferred from homology"/>
<gene>
    <name evidence="1" type="primary">rny</name>
    <name type="ordered locus">Hac_0656</name>
</gene>
<keyword id="KW-1003">Cell membrane</keyword>
<keyword id="KW-0255">Endonuclease</keyword>
<keyword id="KW-0378">Hydrolase</keyword>
<keyword id="KW-0472">Membrane</keyword>
<keyword id="KW-0540">Nuclease</keyword>
<keyword id="KW-0694">RNA-binding</keyword>
<keyword id="KW-0812">Transmembrane</keyword>
<keyword id="KW-1133">Transmembrane helix</keyword>